<gene>
    <name evidence="5" type="primary">macH</name>
</gene>
<feature type="chain" id="PRO_0000454087" description="Cytochrome P450 monooxygenase macH">
    <location>
        <begin position="1"/>
        <end position="510"/>
    </location>
</feature>
<feature type="transmembrane region" description="Helical" evidence="3">
    <location>
        <begin position="7"/>
        <end position="29"/>
    </location>
</feature>
<feature type="binding site" description="axial binding residue" evidence="2">
    <location>
        <position position="454"/>
    </location>
    <ligand>
        <name>heme</name>
        <dbReference type="ChEBI" id="CHEBI:30413"/>
    </ligand>
    <ligandPart>
        <name>Fe</name>
        <dbReference type="ChEBI" id="CHEBI:18248"/>
    </ligandPart>
</feature>
<protein>
    <recommendedName>
        <fullName evidence="5">Cytochrome P450 monooxygenase macH</fullName>
        <ecNumber evidence="1">1.-.-.-</ecNumber>
    </recommendedName>
    <alternativeName>
        <fullName evidence="5">Macrophorins biosynthesis cluster protein H</fullName>
    </alternativeName>
</protein>
<reference key="1">
    <citation type="journal article" date="2017" name="Org. Lett.">
        <title>Late-stage terpene cyclization by an integral membrane cyclase in the biosynthesis of isoprenoid epoxycyclohexenone natural products.</title>
        <authorList>
            <person name="Tang M.C."/>
            <person name="Cui X."/>
            <person name="He X."/>
            <person name="Ding Z."/>
            <person name="Zhu T."/>
            <person name="Tang Y."/>
            <person name="Li D."/>
        </authorList>
    </citation>
    <scope>NUCLEOTIDE SEQUENCE [GENOMIC DNA]</scope>
    <scope>FUNCTION</scope>
    <scope>PATHWAY</scope>
    <source>
        <strain>LM2</strain>
    </source>
</reference>
<comment type="function">
    <text evidence="1 4">Cytochrome P450 monooxygenase; part of the gene cluster that mediates the biosynthesis of macrophorins, isoprenoid epoxycyclohexenones containing cyclized drimane moieties (PubMed:28926261). The first step of the pathway is the synthesis of 6-methylsalicylic acid (6-MSA) by the polyketide synthase macA (PubMed:28926261). 6-MSA is then converted to m-cresol by the decarboxylase macB (By similarity). The cytochrome P450 monooxygenase macC then catalyzes the oxidation of m-cresol to toluquinol (By similarity). Epoxidation of toluquinol is then performed by the short chain dehydrogenase macD, with the help of macE, and a further prenylation by macG leads to 7-deacetoxyyanuthone A (By similarity). The next step is the hydroxylation of C-22 of 7-deacetoxyyanuthone A by the cytochrome P450 monooxygenase macH to yield 22-deacetylyanuthone A (By similarity). O-Mevalon transferase macI then attaches mevalon to the hydroxyl group of 22-deacetylyanuthone A to produce yanuthone E (By similarity). The terpene cyclase macJ catalyzes the cyclization of 22-deacetylyanuthone A to macrophorin A (PubMed:28926261). MacJ is also able to catalyze cyclization of yanuthone E and 7-deacetoxyyanuthone A to their corresponding macrophorins (PubMed:28926261). The macJ products can be further modified by macH and macJ, as well as by the FAD-dependent monooxygenase macF, to produce additional macrophorins, including 4'-oxomacrophorin A, 4'-oxomacrophorin D and 4'-oxomacrophorin E (PubMed:28926261).</text>
</comment>
<comment type="cofactor">
    <cofactor evidence="2">
        <name>heme</name>
        <dbReference type="ChEBI" id="CHEBI:30413"/>
    </cofactor>
</comment>
<comment type="pathway">
    <text evidence="4">Secondary metabolite biosynthesis; terpenoid biosynthesis.</text>
</comment>
<comment type="subcellular location">
    <subcellularLocation>
        <location evidence="3">Membrane</location>
        <topology evidence="3">Single-pass membrane protein</topology>
    </subcellularLocation>
</comment>
<comment type="miscellaneous">
    <text evidence="4">The macrophorins cluster contains a single gene insertion (encoding for the terpene cyclase macJ) compared with the yanuthone cluster that produces the linear compound yanuthone.</text>
</comment>
<comment type="similarity">
    <text evidence="6">Belongs to the cytochrome P450 family.</text>
</comment>
<evidence type="ECO:0000250" key="1">
    <source>
        <dbReference type="UniProtKB" id="G3Y420"/>
    </source>
</evidence>
<evidence type="ECO:0000250" key="2">
    <source>
        <dbReference type="UniProtKB" id="P04798"/>
    </source>
</evidence>
<evidence type="ECO:0000255" key="3"/>
<evidence type="ECO:0000269" key="4">
    <source>
    </source>
</evidence>
<evidence type="ECO:0000303" key="5">
    <source>
    </source>
</evidence>
<evidence type="ECO:0000305" key="6"/>
<name>MACH_PENTR</name>
<accession>A0A2P1DPA5</accession>
<sequence>MALLSVLPVSLWLIAAGTFAVYHAIRAVYLIFFSPLAVFPGSPWAALGEYWEAYWNIGVKPGRKGQMLFKLEEMHKRLGPALRMGPNEVHIYDPAFYHELYRPGSRYYKDPSMHKVLGAPSSTLAESDPVRHKQRKAPLEPLFSKKNILSLEPMLMEHVDRCSQRFDELFAQGKPVSMEWALKSLAMDMVSQFAFGQSLNALADPEFKSLPVRVFQQYLPSLHVIKAFPFVRLLNSLPLWIAKRISHSVEMGHELEQFAARRIDEYMAAAAAGKTPTFPTLMERLLIPIPEKGYAVPDKQGLRDELLTVISAGDDTTGIANTVTLFNIFNNREVHDRLLAELKTVMPTPNSHVSYLQLEALPYLTAVIKEGLRYSSPAASRTPRLVPPGGVRLPDGRFIPAGTRVGMAIYHIHYNETLFESPRVFDPERWLQGPEVTAERAKFLVPFSRGSRSCLGINLAYMEMYMAIAYIVRRFDLDLVGTTEEDMKWDDMVVPQFHGEFMALTKRRED</sequence>
<proteinExistence type="inferred from homology"/>
<organism>
    <name type="scientific">Penicillium terrestre</name>
    <dbReference type="NCBI Taxonomy" id="374132"/>
    <lineage>
        <taxon>Eukaryota</taxon>
        <taxon>Fungi</taxon>
        <taxon>Dikarya</taxon>
        <taxon>Ascomycota</taxon>
        <taxon>Pezizomycotina</taxon>
        <taxon>Eurotiomycetes</taxon>
        <taxon>Eurotiomycetidae</taxon>
        <taxon>Eurotiales</taxon>
        <taxon>Aspergillaceae</taxon>
        <taxon>Penicillium</taxon>
    </lineage>
</organism>
<keyword id="KW-0349">Heme</keyword>
<keyword id="KW-0408">Iron</keyword>
<keyword id="KW-0472">Membrane</keyword>
<keyword id="KW-0479">Metal-binding</keyword>
<keyword id="KW-0503">Monooxygenase</keyword>
<keyword id="KW-0560">Oxidoreductase</keyword>
<keyword id="KW-0812">Transmembrane</keyword>
<keyword id="KW-1133">Transmembrane helix</keyword>
<dbReference type="EC" id="1.-.-.-" evidence="1"/>
<dbReference type="EMBL" id="MF990000">
    <property type="protein sequence ID" value="AVK70101.1"/>
    <property type="molecule type" value="Genomic_DNA"/>
</dbReference>
<dbReference type="EMBL" id="MH388470">
    <property type="protein sequence ID" value="QBC75447.1"/>
    <property type="molecule type" value="Genomic_DNA"/>
</dbReference>
<dbReference type="SMR" id="A0A2P1DPA5"/>
<dbReference type="UniPathway" id="UPA00213"/>
<dbReference type="GO" id="GO:0016020">
    <property type="term" value="C:membrane"/>
    <property type="evidence" value="ECO:0007669"/>
    <property type="project" value="UniProtKB-SubCell"/>
</dbReference>
<dbReference type="GO" id="GO:0020037">
    <property type="term" value="F:heme binding"/>
    <property type="evidence" value="ECO:0007669"/>
    <property type="project" value="InterPro"/>
</dbReference>
<dbReference type="GO" id="GO:0005506">
    <property type="term" value="F:iron ion binding"/>
    <property type="evidence" value="ECO:0007669"/>
    <property type="project" value="InterPro"/>
</dbReference>
<dbReference type="GO" id="GO:0004497">
    <property type="term" value="F:monooxygenase activity"/>
    <property type="evidence" value="ECO:0007669"/>
    <property type="project" value="UniProtKB-KW"/>
</dbReference>
<dbReference type="GO" id="GO:0016705">
    <property type="term" value="F:oxidoreductase activity, acting on paired donors, with incorporation or reduction of molecular oxygen"/>
    <property type="evidence" value="ECO:0007669"/>
    <property type="project" value="InterPro"/>
</dbReference>
<dbReference type="GO" id="GO:0043386">
    <property type="term" value="P:mycotoxin biosynthetic process"/>
    <property type="evidence" value="ECO:0007669"/>
    <property type="project" value="UniProtKB-ARBA"/>
</dbReference>
<dbReference type="GO" id="GO:0016114">
    <property type="term" value="P:terpenoid biosynthetic process"/>
    <property type="evidence" value="ECO:0007669"/>
    <property type="project" value="UniProtKB-UniPathway"/>
</dbReference>
<dbReference type="CDD" id="cd11062">
    <property type="entry name" value="CYP58-like"/>
    <property type="match status" value="1"/>
</dbReference>
<dbReference type="Gene3D" id="1.10.630.10">
    <property type="entry name" value="Cytochrome P450"/>
    <property type="match status" value="1"/>
</dbReference>
<dbReference type="InterPro" id="IPR001128">
    <property type="entry name" value="Cyt_P450"/>
</dbReference>
<dbReference type="InterPro" id="IPR017972">
    <property type="entry name" value="Cyt_P450_CS"/>
</dbReference>
<dbReference type="InterPro" id="IPR002401">
    <property type="entry name" value="Cyt_P450_E_grp-I"/>
</dbReference>
<dbReference type="InterPro" id="IPR036396">
    <property type="entry name" value="Cyt_P450_sf"/>
</dbReference>
<dbReference type="InterPro" id="IPR050121">
    <property type="entry name" value="Cytochrome_P450_monoxygenase"/>
</dbReference>
<dbReference type="PANTHER" id="PTHR24305">
    <property type="entry name" value="CYTOCHROME P450"/>
    <property type="match status" value="1"/>
</dbReference>
<dbReference type="PANTHER" id="PTHR24305:SF152">
    <property type="entry name" value="P450, PUTATIVE (EUROFUNG)-RELATED"/>
    <property type="match status" value="1"/>
</dbReference>
<dbReference type="Pfam" id="PF00067">
    <property type="entry name" value="p450"/>
    <property type="match status" value="1"/>
</dbReference>
<dbReference type="PRINTS" id="PR00463">
    <property type="entry name" value="EP450I"/>
</dbReference>
<dbReference type="PRINTS" id="PR00385">
    <property type="entry name" value="P450"/>
</dbReference>
<dbReference type="SUPFAM" id="SSF48264">
    <property type="entry name" value="Cytochrome P450"/>
    <property type="match status" value="1"/>
</dbReference>
<dbReference type="PROSITE" id="PS00086">
    <property type="entry name" value="CYTOCHROME_P450"/>
    <property type="match status" value="1"/>
</dbReference>